<reference key="1">
    <citation type="journal article" date="2002" name="Nature">
        <title>Genome sequence of the plant pathogen Ralstonia solanacearum.</title>
        <authorList>
            <person name="Salanoubat M."/>
            <person name="Genin S."/>
            <person name="Artiguenave F."/>
            <person name="Gouzy J."/>
            <person name="Mangenot S."/>
            <person name="Arlat M."/>
            <person name="Billault A."/>
            <person name="Brottier P."/>
            <person name="Camus J.-C."/>
            <person name="Cattolico L."/>
            <person name="Chandler M."/>
            <person name="Choisne N."/>
            <person name="Claudel-Renard C."/>
            <person name="Cunnac S."/>
            <person name="Demange N."/>
            <person name="Gaspin C."/>
            <person name="Lavie M."/>
            <person name="Moisan A."/>
            <person name="Robert C."/>
            <person name="Saurin W."/>
            <person name="Schiex T."/>
            <person name="Siguier P."/>
            <person name="Thebault P."/>
            <person name="Whalen M."/>
            <person name="Wincker P."/>
            <person name="Levy M."/>
            <person name="Weissenbach J."/>
            <person name="Boucher C.A."/>
        </authorList>
    </citation>
    <scope>NUCLEOTIDE SEQUENCE [LARGE SCALE GENOMIC DNA]</scope>
    <source>
        <strain>ATCC BAA-1114 / GMI1000</strain>
    </source>
</reference>
<name>HEM3_RALN1</name>
<keyword id="KW-0627">Porphyrin biosynthesis</keyword>
<keyword id="KW-1185">Reference proteome</keyword>
<keyword id="KW-0808">Transferase</keyword>
<feature type="chain" id="PRO_0000142977" description="Porphobilinogen deaminase">
    <location>
        <begin position="1"/>
        <end position="334"/>
    </location>
</feature>
<feature type="modified residue" description="S-(dipyrrolylmethanemethyl)cysteine" evidence="1">
    <location>
        <position position="258"/>
    </location>
</feature>
<comment type="function">
    <text evidence="1">Tetrapolymerization of the monopyrrole PBG into the hydroxymethylbilane pre-uroporphyrinogen in several discrete steps.</text>
</comment>
<comment type="catalytic activity">
    <reaction evidence="1">
        <text>4 porphobilinogen + H2O = hydroxymethylbilane + 4 NH4(+)</text>
        <dbReference type="Rhea" id="RHEA:13185"/>
        <dbReference type="ChEBI" id="CHEBI:15377"/>
        <dbReference type="ChEBI" id="CHEBI:28938"/>
        <dbReference type="ChEBI" id="CHEBI:57845"/>
        <dbReference type="ChEBI" id="CHEBI:58126"/>
        <dbReference type="EC" id="2.5.1.61"/>
    </reaction>
</comment>
<comment type="cofactor">
    <cofactor evidence="1">
        <name>dipyrromethane</name>
        <dbReference type="ChEBI" id="CHEBI:60342"/>
    </cofactor>
    <text evidence="1">Binds 1 dipyrromethane group covalently.</text>
</comment>
<comment type="pathway">
    <text evidence="1">Porphyrin-containing compound metabolism; protoporphyrin-IX biosynthesis; coproporphyrinogen-III from 5-aminolevulinate: step 2/4.</text>
</comment>
<comment type="subunit">
    <text evidence="1">Monomer.</text>
</comment>
<comment type="miscellaneous">
    <text evidence="1">The porphobilinogen subunits are added to the dipyrromethane group.</text>
</comment>
<comment type="similarity">
    <text evidence="1">Belongs to the HMBS family.</text>
</comment>
<accession>Q8XWW3</accession>
<evidence type="ECO:0000255" key="1">
    <source>
        <dbReference type="HAMAP-Rule" id="MF_00260"/>
    </source>
</evidence>
<protein>
    <recommendedName>
        <fullName evidence="1">Porphobilinogen deaminase</fullName>
        <shortName evidence="1">PBG</shortName>
        <ecNumber evidence="1">2.5.1.61</ecNumber>
    </recommendedName>
    <alternativeName>
        <fullName evidence="1">Hydroxymethylbilane synthase</fullName>
        <shortName evidence="1">HMBS</shortName>
    </alternativeName>
    <alternativeName>
        <fullName evidence="1">Pre-uroporphyrinogen synthase</fullName>
    </alternativeName>
</protein>
<proteinExistence type="inferred from homology"/>
<dbReference type="EC" id="2.5.1.61" evidence="1"/>
<dbReference type="EMBL" id="AL646052">
    <property type="protein sequence ID" value="CAD16064.1"/>
    <property type="molecule type" value="Genomic_DNA"/>
</dbReference>
<dbReference type="RefSeq" id="WP_011002280.1">
    <property type="nucleotide sequence ID" value="NC_003295.1"/>
</dbReference>
<dbReference type="SMR" id="Q8XWW3"/>
<dbReference type="STRING" id="267608.RSc2357"/>
<dbReference type="EnsemblBacteria" id="CAD16064">
    <property type="protein sequence ID" value="CAD16064"/>
    <property type="gene ID" value="RSc2357"/>
</dbReference>
<dbReference type="KEGG" id="rso:RSc2357"/>
<dbReference type="eggNOG" id="COG0181">
    <property type="taxonomic scope" value="Bacteria"/>
</dbReference>
<dbReference type="HOGENOM" id="CLU_019704_0_2_4"/>
<dbReference type="UniPathway" id="UPA00251">
    <property type="reaction ID" value="UER00319"/>
</dbReference>
<dbReference type="Proteomes" id="UP000001436">
    <property type="component" value="Chromosome"/>
</dbReference>
<dbReference type="GO" id="GO:0005737">
    <property type="term" value="C:cytoplasm"/>
    <property type="evidence" value="ECO:0007669"/>
    <property type="project" value="TreeGrafter"/>
</dbReference>
<dbReference type="GO" id="GO:0004418">
    <property type="term" value="F:hydroxymethylbilane synthase activity"/>
    <property type="evidence" value="ECO:0007669"/>
    <property type="project" value="UniProtKB-UniRule"/>
</dbReference>
<dbReference type="GO" id="GO:0006782">
    <property type="term" value="P:protoporphyrinogen IX biosynthetic process"/>
    <property type="evidence" value="ECO:0007669"/>
    <property type="project" value="UniProtKB-UniRule"/>
</dbReference>
<dbReference type="CDD" id="cd13646">
    <property type="entry name" value="PBP2_EcHMBS_like"/>
    <property type="match status" value="1"/>
</dbReference>
<dbReference type="FunFam" id="3.40.190.10:FF:000004">
    <property type="entry name" value="Porphobilinogen deaminase"/>
    <property type="match status" value="1"/>
</dbReference>
<dbReference type="FunFam" id="3.40.190.10:FF:000005">
    <property type="entry name" value="Porphobilinogen deaminase"/>
    <property type="match status" value="1"/>
</dbReference>
<dbReference type="Gene3D" id="3.40.190.10">
    <property type="entry name" value="Periplasmic binding protein-like II"/>
    <property type="match status" value="2"/>
</dbReference>
<dbReference type="Gene3D" id="3.30.160.40">
    <property type="entry name" value="Porphobilinogen deaminase, C-terminal domain"/>
    <property type="match status" value="1"/>
</dbReference>
<dbReference type="HAMAP" id="MF_00260">
    <property type="entry name" value="Porphobil_deam"/>
    <property type="match status" value="1"/>
</dbReference>
<dbReference type="InterPro" id="IPR000860">
    <property type="entry name" value="HemC"/>
</dbReference>
<dbReference type="InterPro" id="IPR022419">
    <property type="entry name" value="Porphobilin_deaminase_cofac_BS"/>
</dbReference>
<dbReference type="InterPro" id="IPR022417">
    <property type="entry name" value="Porphobilin_deaminase_N"/>
</dbReference>
<dbReference type="InterPro" id="IPR022418">
    <property type="entry name" value="Porphobilinogen_deaminase_C"/>
</dbReference>
<dbReference type="InterPro" id="IPR036803">
    <property type="entry name" value="Porphobilinogen_deaminase_C_sf"/>
</dbReference>
<dbReference type="NCBIfam" id="TIGR00212">
    <property type="entry name" value="hemC"/>
    <property type="match status" value="1"/>
</dbReference>
<dbReference type="PANTHER" id="PTHR11557">
    <property type="entry name" value="PORPHOBILINOGEN DEAMINASE"/>
    <property type="match status" value="1"/>
</dbReference>
<dbReference type="PANTHER" id="PTHR11557:SF0">
    <property type="entry name" value="PORPHOBILINOGEN DEAMINASE"/>
    <property type="match status" value="1"/>
</dbReference>
<dbReference type="Pfam" id="PF01379">
    <property type="entry name" value="Porphobil_deam"/>
    <property type="match status" value="1"/>
</dbReference>
<dbReference type="Pfam" id="PF03900">
    <property type="entry name" value="Porphobil_deamC"/>
    <property type="match status" value="1"/>
</dbReference>
<dbReference type="PIRSF" id="PIRSF001438">
    <property type="entry name" value="4pyrrol_synth_OHMeBilane_synth"/>
    <property type="match status" value="1"/>
</dbReference>
<dbReference type="PRINTS" id="PR00151">
    <property type="entry name" value="PORPHBDMNASE"/>
</dbReference>
<dbReference type="SUPFAM" id="SSF53850">
    <property type="entry name" value="Periplasmic binding protein-like II"/>
    <property type="match status" value="1"/>
</dbReference>
<dbReference type="SUPFAM" id="SSF54782">
    <property type="entry name" value="Porphobilinogen deaminase (hydroxymethylbilane synthase), C-terminal domain"/>
    <property type="match status" value="1"/>
</dbReference>
<dbReference type="PROSITE" id="PS00533">
    <property type="entry name" value="PORPHOBILINOGEN_DEAM"/>
    <property type="match status" value="1"/>
</dbReference>
<sequence length="334" mass="35187">MSSNARPTSVESPLAAQAPTKLVIASRESRLAMWQAEYVRAALQKYYPACDVSILGMTTRGDQILDRSLAKVGGKGLFVKELEVALAEGRADLAVHSLKDVPMELPPGFVLSAILEREDPRDAFVSNDYADLAALPAGAVVGTSSLRREASLRARFPHLVIQPLRGNLDTRLSKLDRGDYAAIILAAAGLKRLGLSERIRAVIAPETSLPAAGQGALGIESRVDRHDVQAWLAPLHHAPTALAVTAERAVSRQLGGSCQVPLAAFAQWTDAGALRLRAFVASPDGRRKLAAEAEATPATPAEAEALGARVAQQMLDGGAHDILATLGADAPPAT</sequence>
<gene>
    <name evidence="1" type="primary">hemC</name>
    <name type="ordered locus">RSc2357</name>
    <name type="ORF">RS01189</name>
</gene>
<organism>
    <name type="scientific">Ralstonia nicotianae (strain ATCC BAA-1114 / GMI1000)</name>
    <name type="common">Ralstonia solanacearum</name>
    <dbReference type="NCBI Taxonomy" id="267608"/>
    <lineage>
        <taxon>Bacteria</taxon>
        <taxon>Pseudomonadati</taxon>
        <taxon>Pseudomonadota</taxon>
        <taxon>Betaproteobacteria</taxon>
        <taxon>Burkholderiales</taxon>
        <taxon>Burkholderiaceae</taxon>
        <taxon>Ralstonia</taxon>
        <taxon>Ralstonia solanacearum species complex</taxon>
    </lineage>
</organism>